<keyword id="KW-0044">Antibiotic</keyword>
<keyword id="KW-0929">Antimicrobial</keyword>
<keyword id="KW-0211">Defensin</keyword>
<keyword id="KW-0903">Direct protein sequencing</keyword>
<keyword id="KW-1015">Disulfide bond</keyword>
<keyword id="KW-0391">Immunity</keyword>
<keyword id="KW-0399">Innate immunity</keyword>
<keyword id="KW-0964">Secreted</keyword>
<feature type="peptide" id="PRO_0000257983" description="Defensin-1" evidence="3">
    <location>
        <begin position="1"/>
        <end position="38"/>
    </location>
</feature>
<feature type="disulfide bond" evidence="1">
    <location>
        <begin position="4"/>
        <end position="25"/>
    </location>
</feature>
<feature type="disulfide bond" evidence="1">
    <location>
        <begin position="11"/>
        <end position="33"/>
    </location>
</feature>
<feature type="disulfide bond" evidence="1">
    <location>
        <begin position="15"/>
        <end position="35"/>
    </location>
</feature>
<sequence length="38" mass="4271">GFGCPWNRYQCHSHCRSIGRLGGYCAGSLRLTCTCYRS</sequence>
<dbReference type="SMR" id="P85008"/>
<dbReference type="GO" id="GO:0005576">
    <property type="term" value="C:extracellular region"/>
    <property type="evidence" value="ECO:0007669"/>
    <property type="project" value="UniProtKB-SubCell"/>
</dbReference>
<dbReference type="GO" id="GO:0050829">
    <property type="term" value="P:defense response to Gram-negative bacterium"/>
    <property type="evidence" value="ECO:0000314"/>
    <property type="project" value="UniProtKB"/>
</dbReference>
<dbReference type="GO" id="GO:0050830">
    <property type="term" value="P:defense response to Gram-positive bacterium"/>
    <property type="evidence" value="ECO:0000314"/>
    <property type="project" value="UniProtKB"/>
</dbReference>
<dbReference type="GO" id="GO:0045087">
    <property type="term" value="P:innate immune response"/>
    <property type="evidence" value="ECO:0000314"/>
    <property type="project" value="UniProtKB"/>
</dbReference>
<dbReference type="FunFam" id="3.30.30.10:FF:000006">
    <property type="entry name" value="Defensin DFS2"/>
    <property type="match status" value="1"/>
</dbReference>
<dbReference type="Gene3D" id="3.30.30.10">
    <property type="entry name" value="Knottin, scorpion toxin-like"/>
    <property type="match status" value="1"/>
</dbReference>
<dbReference type="InterPro" id="IPR001542">
    <property type="entry name" value="Defensin_invertebrate/fungal"/>
</dbReference>
<dbReference type="InterPro" id="IPR036574">
    <property type="entry name" value="Scorpion_toxin-like_sf"/>
</dbReference>
<dbReference type="Pfam" id="PF01097">
    <property type="entry name" value="Defensin_2"/>
    <property type="match status" value="1"/>
</dbReference>
<dbReference type="SUPFAM" id="SSF57095">
    <property type="entry name" value="Scorpion toxin-like"/>
    <property type="match status" value="1"/>
</dbReference>
<dbReference type="PROSITE" id="PS51378">
    <property type="entry name" value="INVERT_DEFENSINS"/>
    <property type="match status" value="1"/>
</dbReference>
<evidence type="ECO:0000250" key="1">
    <source>
        <dbReference type="UniProtKB" id="I1T3C7"/>
    </source>
</evidence>
<evidence type="ECO:0000255" key="2">
    <source>
        <dbReference type="PROSITE-ProRule" id="PRU00710"/>
    </source>
</evidence>
<evidence type="ECO:0000269" key="3">
    <source>
    </source>
</evidence>
<evidence type="ECO:0000305" key="4"/>
<evidence type="ECO:0000305" key="5">
    <source>
    </source>
</evidence>
<organism>
    <name type="scientific">Crassostrea virginica</name>
    <name type="common">Eastern oyster</name>
    <dbReference type="NCBI Taxonomy" id="6565"/>
    <lineage>
        <taxon>Eukaryota</taxon>
        <taxon>Metazoa</taxon>
        <taxon>Spiralia</taxon>
        <taxon>Lophotrochozoa</taxon>
        <taxon>Mollusca</taxon>
        <taxon>Bivalvia</taxon>
        <taxon>Autobranchia</taxon>
        <taxon>Pteriomorphia</taxon>
        <taxon>Ostreida</taxon>
        <taxon>Ostreoidea</taxon>
        <taxon>Ostreidae</taxon>
        <taxon>Crassostrea</taxon>
    </lineage>
</organism>
<protein>
    <recommendedName>
        <fullName>Defensin-1</fullName>
    </recommendedName>
    <alternativeName>
        <fullName>American oyster defensin</fullName>
        <shortName>AOD</shortName>
    </alternativeName>
</protein>
<proteinExistence type="evidence at protein level"/>
<name>DEF1_CRAVI</name>
<accession>P85008</accession>
<comment type="function">
    <text evidence="3">Has antibacterial activity against the Gram-positive bacteria L.lactis and S.aureus, and against the Gram-negative bacteria E.coli D32 and V.parahemolyticus.</text>
</comment>
<comment type="subcellular location">
    <subcellularLocation>
        <location evidence="5">Secreted</location>
    </subcellularLocation>
</comment>
<comment type="mass spectrometry" mass="4265.0" method="Electrospray" evidence="3"/>
<comment type="similarity">
    <text evidence="2">Belongs to the invertebrate defensin family. Type 2 subfamily.</text>
</comment>
<reference evidence="4" key="1">
    <citation type="journal article" date="2005" name="Biochem. Biophys. Res. Commun.">
        <title>Purification of a novel arthropod defensin from the American oyster, Crassostrea virginica.</title>
        <authorList>
            <person name="Seo J.-K."/>
            <person name="Crawford J.M."/>
            <person name="Stone K.L."/>
            <person name="Noga E.J."/>
        </authorList>
    </citation>
    <scope>PROTEIN SEQUENCE</scope>
    <scope>FUNCTION</scope>
    <scope>DISULFIDE BONDS</scope>
    <scope>MASS SPECTROMETRY</scope>
    <source>
        <tissue evidence="3">Gill</tissue>
    </source>
</reference>